<evidence type="ECO:0000250" key="1"/>
<evidence type="ECO:0000305" key="2"/>
<comment type="catalytic activity">
    <reaction>
        <text>D-erythro-1-(imidazol-4-yl)glycerol 3-phosphate = 3-(imidazol-4-yl)-2-oxopropyl phosphate + H2O</text>
        <dbReference type="Rhea" id="RHEA:11040"/>
        <dbReference type="ChEBI" id="CHEBI:15377"/>
        <dbReference type="ChEBI" id="CHEBI:57766"/>
        <dbReference type="ChEBI" id="CHEBI:58278"/>
        <dbReference type="EC" id="4.2.1.19"/>
    </reaction>
</comment>
<comment type="pathway">
    <text>Amino-acid biosynthesis; L-histidine biosynthesis; L-histidine from 5-phospho-alpha-D-ribose 1-diphosphate: step 6/9.</text>
</comment>
<comment type="subcellular location">
    <subcellularLocation>
        <location evidence="1">Cytoplasm</location>
    </subcellularLocation>
</comment>
<comment type="similarity">
    <text evidence="2">Belongs to the imidazoleglycerol-phosphate dehydratase family.</text>
</comment>
<keyword id="KW-0028">Amino-acid biosynthesis</keyword>
<keyword id="KW-0963">Cytoplasm</keyword>
<keyword id="KW-0368">Histidine biosynthesis</keyword>
<keyword id="KW-0456">Lyase</keyword>
<dbReference type="EC" id="4.2.1.19"/>
<dbReference type="EMBL" id="X17435">
    <property type="protein sequence ID" value="CAA35478.1"/>
    <property type="molecule type" value="Genomic_DNA"/>
</dbReference>
<dbReference type="EMBL" id="X61207">
    <property type="protein sequence ID" value="CAA43515.1"/>
    <property type="molecule type" value="Genomic_DNA"/>
</dbReference>
<dbReference type="PIR" id="JE0045">
    <property type="entry name" value="JE0045"/>
</dbReference>
<dbReference type="SMR" id="P18787"/>
<dbReference type="UniPathway" id="UPA00031">
    <property type="reaction ID" value="UER00011"/>
</dbReference>
<dbReference type="GO" id="GO:0005737">
    <property type="term" value="C:cytoplasm"/>
    <property type="evidence" value="ECO:0007669"/>
    <property type="project" value="UniProtKB-SubCell"/>
</dbReference>
<dbReference type="GO" id="GO:0004424">
    <property type="term" value="F:imidazoleglycerol-phosphate dehydratase activity"/>
    <property type="evidence" value="ECO:0007669"/>
    <property type="project" value="UniProtKB-UniRule"/>
</dbReference>
<dbReference type="GO" id="GO:0000105">
    <property type="term" value="P:L-histidine biosynthetic process"/>
    <property type="evidence" value="ECO:0007669"/>
    <property type="project" value="UniProtKB-UniRule"/>
</dbReference>
<dbReference type="CDD" id="cd07914">
    <property type="entry name" value="IGPD"/>
    <property type="match status" value="1"/>
</dbReference>
<dbReference type="FunFam" id="3.30.230.40:FF:000001">
    <property type="entry name" value="Imidazoleglycerol-phosphate dehydratase HisB"/>
    <property type="match status" value="1"/>
</dbReference>
<dbReference type="FunFam" id="3.30.230.40:FF:000003">
    <property type="entry name" value="Imidazoleglycerol-phosphate dehydratase HisB"/>
    <property type="match status" value="1"/>
</dbReference>
<dbReference type="Gene3D" id="3.30.230.40">
    <property type="entry name" value="Imidazole glycerol phosphate dehydratase, domain 1"/>
    <property type="match status" value="2"/>
</dbReference>
<dbReference type="HAMAP" id="MF_00076">
    <property type="entry name" value="HisB"/>
    <property type="match status" value="1"/>
</dbReference>
<dbReference type="InterPro" id="IPR038494">
    <property type="entry name" value="IGPD_sf"/>
</dbReference>
<dbReference type="InterPro" id="IPR000807">
    <property type="entry name" value="ImidazoleglycerolP_deHydtase"/>
</dbReference>
<dbReference type="InterPro" id="IPR020565">
    <property type="entry name" value="ImidazoleglycerP_deHydtase_CS"/>
</dbReference>
<dbReference type="InterPro" id="IPR020568">
    <property type="entry name" value="Ribosomal_Su5_D2-typ_SF"/>
</dbReference>
<dbReference type="NCBIfam" id="NF002109">
    <property type="entry name" value="PRK00951.1-5"/>
    <property type="match status" value="1"/>
</dbReference>
<dbReference type="NCBIfam" id="NF002111">
    <property type="entry name" value="PRK00951.2-1"/>
    <property type="match status" value="1"/>
</dbReference>
<dbReference type="NCBIfam" id="NF002114">
    <property type="entry name" value="PRK00951.2-4"/>
    <property type="match status" value="1"/>
</dbReference>
<dbReference type="PANTHER" id="PTHR23133:SF2">
    <property type="entry name" value="IMIDAZOLEGLYCEROL-PHOSPHATE DEHYDRATASE"/>
    <property type="match status" value="1"/>
</dbReference>
<dbReference type="PANTHER" id="PTHR23133">
    <property type="entry name" value="IMIDAZOLEGLYCEROL-PHOSPHATE DEHYDRATASE HIS7"/>
    <property type="match status" value="1"/>
</dbReference>
<dbReference type="Pfam" id="PF00475">
    <property type="entry name" value="IGPD"/>
    <property type="match status" value="1"/>
</dbReference>
<dbReference type="SUPFAM" id="SSF54211">
    <property type="entry name" value="Ribosomal protein S5 domain 2-like"/>
    <property type="match status" value="2"/>
</dbReference>
<dbReference type="PROSITE" id="PS00954">
    <property type="entry name" value="IGP_DEHYDRATASE_1"/>
    <property type="match status" value="1"/>
</dbReference>
<dbReference type="PROSITE" id="PS00955">
    <property type="entry name" value="IGP_DEHYDRATASE_2"/>
    <property type="match status" value="1"/>
</dbReference>
<sequence>MDQSLANGVGGASIERNTTETRIRVAVNLDGTGVYDVKTGVGFLDHMLEQLSRHSLMDLSVAAEGDVHIDAHHTTEHSGIAIGQAVAKAVGDRKGIQRYGHAYVPMDETLTRVALDFSNRPYLIWKVSFSRDKIGDMDTELFREWFQAFAMAAGVTLHVECLYGENNHHIVESCYKALARALRAGIEIDPRKRDAVPSTKGTLGGSL</sequence>
<gene>
    <name type="primary">hisB</name>
</gene>
<accession>P18787</accession>
<organism>
    <name type="scientific">Azospirillum brasilense</name>
    <dbReference type="NCBI Taxonomy" id="192"/>
    <lineage>
        <taxon>Bacteria</taxon>
        <taxon>Pseudomonadati</taxon>
        <taxon>Pseudomonadota</taxon>
        <taxon>Alphaproteobacteria</taxon>
        <taxon>Rhodospirillales</taxon>
        <taxon>Azospirillaceae</taxon>
        <taxon>Azospirillum</taxon>
    </lineage>
</organism>
<protein>
    <recommendedName>
        <fullName>Imidazoleglycerol-phosphate dehydratase</fullName>
        <shortName>IGPD</shortName>
        <ecNumber>4.2.1.19</ecNumber>
    </recommendedName>
</protein>
<feature type="chain" id="PRO_0000158101" description="Imidazoleglycerol-phosphate dehydratase">
    <location>
        <begin position="1"/>
        <end position="207"/>
    </location>
</feature>
<name>HIS7_AZOBR</name>
<proteinExistence type="inferred from homology"/>
<reference key="1">
    <citation type="journal article" date="1989" name="Mol. Gen. Genet.">
        <title>Cloning of histidine genes of Azospirillum brasilense: organization of the ABFH gene cluster and nucleotide sequence of the hisB gene.</title>
        <authorList>
            <person name="Fani R."/>
            <person name="Bazzicalupo M."/>
            <person name="Damiani G."/>
            <person name="Bianchi A."/>
            <person name="Schipani C."/>
            <person name="Sgaramella V."/>
            <person name="Polsinelli M."/>
        </authorList>
    </citation>
    <scope>NUCLEOTIDE SEQUENCE [GENOMIC DNA]</scope>
    <source>
        <strain>Sp6</strain>
    </source>
</reference>